<evidence type="ECO:0000255" key="1">
    <source>
        <dbReference type="HAMAP-Rule" id="MF_01834"/>
    </source>
</evidence>
<gene>
    <name evidence="1" type="primary">endA</name>
    <name type="ordered locus">OE_4102R</name>
</gene>
<feature type="chain" id="PRO_1000188344" description="tRNA-splicing endonuclease">
    <location>
        <begin position="1"/>
        <end position="343"/>
    </location>
</feature>
<feature type="active site" evidence="1">
    <location>
        <position position="277"/>
    </location>
</feature>
<feature type="active site" evidence="1">
    <location>
        <position position="288"/>
    </location>
</feature>
<feature type="active site" evidence="1">
    <location>
        <position position="319"/>
    </location>
</feature>
<reference key="1">
    <citation type="journal article" date="2008" name="Genomics">
        <title>Evolution in the laboratory: the genome of Halobacterium salinarum strain R1 compared to that of strain NRC-1.</title>
        <authorList>
            <person name="Pfeiffer F."/>
            <person name="Schuster S.C."/>
            <person name="Broicher A."/>
            <person name="Falb M."/>
            <person name="Palm P."/>
            <person name="Rodewald K."/>
            <person name="Ruepp A."/>
            <person name="Soppa J."/>
            <person name="Tittor J."/>
            <person name="Oesterhelt D."/>
        </authorList>
    </citation>
    <scope>NUCLEOTIDE SEQUENCE [LARGE SCALE GENOMIC DNA]</scope>
    <source>
        <strain>ATCC 29341 / DSM 671 / R1</strain>
    </source>
</reference>
<comment type="function">
    <text evidence="1">Endonuclease that removes tRNA introns. Cleaves pre-tRNA at the 5' and 3' splice sites to release the intron. The products are an intron and two tRNA half-molecules bearing 2',3' cyclic phosphate and 5'-OH termini. Recognizes a pseudosymmetric substrate in which 2 bulged loops of 3 bases are separated by a stem of 4 bp.</text>
</comment>
<comment type="catalytic activity">
    <reaction evidence="1">
        <text>pretRNA = a 3'-half-tRNA molecule with a 5'-OH end + a 5'-half-tRNA molecule with a 2',3'-cyclic phosphate end + an intron with a 2',3'-cyclic phosphate and a 5'-hydroxyl terminus.</text>
        <dbReference type="EC" id="4.6.1.16"/>
    </reaction>
</comment>
<comment type="subunit">
    <text evidence="1">Homodimer.</text>
</comment>
<comment type="similarity">
    <text evidence="1">Belongs to the tRNA-intron endonuclease family. Archaeal long subfamily.</text>
</comment>
<dbReference type="EC" id="4.6.1.16" evidence="1"/>
<dbReference type="EMBL" id="AM774415">
    <property type="protein sequence ID" value="CAP14639.1"/>
    <property type="molecule type" value="Genomic_DNA"/>
</dbReference>
<dbReference type="RefSeq" id="WP_010903640.1">
    <property type="nucleotide sequence ID" value="NC_010364.1"/>
</dbReference>
<dbReference type="SMR" id="B0R7C0"/>
<dbReference type="EnsemblBacteria" id="CAP14639">
    <property type="protein sequence ID" value="CAP14639"/>
    <property type="gene ID" value="OE_4102R"/>
</dbReference>
<dbReference type="GeneID" id="68694770"/>
<dbReference type="KEGG" id="hsl:OE_4102R"/>
<dbReference type="HOGENOM" id="CLU_791347_0_0_2"/>
<dbReference type="PhylomeDB" id="B0R7C0"/>
<dbReference type="Proteomes" id="UP000001321">
    <property type="component" value="Chromosome"/>
</dbReference>
<dbReference type="GO" id="GO:0005737">
    <property type="term" value="C:cytoplasm"/>
    <property type="evidence" value="ECO:0007669"/>
    <property type="project" value="TreeGrafter"/>
</dbReference>
<dbReference type="GO" id="GO:0016829">
    <property type="term" value="F:lyase activity"/>
    <property type="evidence" value="ECO:0007669"/>
    <property type="project" value="UniProtKB-KW"/>
</dbReference>
<dbReference type="GO" id="GO:0003676">
    <property type="term" value="F:nucleic acid binding"/>
    <property type="evidence" value="ECO:0007669"/>
    <property type="project" value="InterPro"/>
</dbReference>
<dbReference type="GO" id="GO:0000213">
    <property type="term" value="F:tRNA-intron endonuclease activity"/>
    <property type="evidence" value="ECO:0007669"/>
    <property type="project" value="UniProtKB-UniRule"/>
</dbReference>
<dbReference type="GO" id="GO:0006388">
    <property type="term" value="P:tRNA splicing, via endonucleolytic cleavage and ligation"/>
    <property type="evidence" value="ECO:0007669"/>
    <property type="project" value="UniProtKB-UniRule"/>
</dbReference>
<dbReference type="CDD" id="cd22363">
    <property type="entry name" value="tRNA-intron_lyase_C"/>
    <property type="match status" value="2"/>
</dbReference>
<dbReference type="FunFam" id="3.40.1350.10:FF:000006">
    <property type="entry name" value="tRNA-splicing endonuclease"/>
    <property type="match status" value="1"/>
</dbReference>
<dbReference type="Gene3D" id="3.40.1350.10">
    <property type="match status" value="2"/>
</dbReference>
<dbReference type="Gene3D" id="3.40.1170.20">
    <property type="entry name" value="tRNA intron endonuclease, N-terminal domain"/>
    <property type="match status" value="2"/>
</dbReference>
<dbReference type="HAMAP" id="MF_01834">
    <property type="entry name" value="EndA_long"/>
    <property type="match status" value="1"/>
</dbReference>
<dbReference type="InterPro" id="IPR011856">
    <property type="entry name" value="tRNA_endonuc-like_dom_sf"/>
</dbReference>
<dbReference type="InterPro" id="IPR036167">
    <property type="entry name" value="tRNA_intron_Endo_cat-like_sf"/>
</dbReference>
<dbReference type="InterPro" id="IPR006677">
    <property type="entry name" value="tRNA_intron_Endonuc_cat-like"/>
</dbReference>
<dbReference type="InterPro" id="IPR006678">
    <property type="entry name" value="tRNA_intron_Endonuc_N"/>
</dbReference>
<dbReference type="InterPro" id="IPR036740">
    <property type="entry name" value="tRNA_intron_Endonuc_N_sf"/>
</dbReference>
<dbReference type="InterPro" id="IPR006676">
    <property type="entry name" value="tRNA_splic"/>
</dbReference>
<dbReference type="InterPro" id="IPR023516">
    <property type="entry name" value="tRNA_splic_arch_long"/>
</dbReference>
<dbReference type="NCBIfam" id="TIGR00324">
    <property type="entry name" value="endA"/>
    <property type="match status" value="1"/>
</dbReference>
<dbReference type="NCBIfam" id="NF006794">
    <property type="entry name" value="PRK09300.1-1"/>
    <property type="match status" value="1"/>
</dbReference>
<dbReference type="PANTHER" id="PTHR21227">
    <property type="entry name" value="TRNA-SPLICING ENDONUCLEASE SUBUNIT SEN2"/>
    <property type="match status" value="1"/>
</dbReference>
<dbReference type="PANTHER" id="PTHR21227:SF0">
    <property type="entry name" value="TRNA-SPLICING ENDONUCLEASE SUBUNIT SEN2"/>
    <property type="match status" value="1"/>
</dbReference>
<dbReference type="Pfam" id="PF01974">
    <property type="entry name" value="tRNA_int_endo"/>
    <property type="match status" value="1"/>
</dbReference>
<dbReference type="Pfam" id="PF02778">
    <property type="entry name" value="tRNA_int_endo_N"/>
    <property type="match status" value="2"/>
</dbReference>
<dbReference type="SUPFAM" id="SSF53032">
    <property type="entry name" value="tRNA-intron endonuclease catalytic domain-like"/>
    <property type="match status" value="2"/>
</dbReference>
<dbReference type="SUPFAM" id="SSF55267">
    <property type="entry name" value="tRNA-intron endonuclease N-terminal domain-like"/>
    <property type="match status" value="2"/>
</dbReference>
<name>ENDA_HALS3</name>
<sequence length="343" mass="37872">MDGDLRGDTVHIGGDARQRFHDARGYGYPLGGNDIAVSLVEAAHLLFRGDLDSVDGMGFRAFLTDREAGFAARFLVYVDLRDRGFYLVPDRDPWWRDPGDGDFVVFPRGNTRRDGVVKHRVRVVDERTTLPVDGLSESVLAVVDEESEITYLDIAPETPTGETTLDRPTDVPGVLLDDRVLVWEPPQRLHNAGFYGQPLGGRAADHDALQLSLVEAAYLIDAGVLRLTDATIDDVRARGRLGEGEHFDCRLAVYRALRDAGAVPKTGFKFGADFRVYSAVSSVDDLGHSELLVRVITDTHVFSPGDLSLDVRLAHGVRKRMVFAATDDTDDTIRWLSVSRLTP</sequence>
<protein>
    <recommendedName>
        <fullName evidence="1">tRNA-splicing endonuclease</fullName>
        <ecNumber evidence="1">4.6.1.16</ecNumber>
    </recommendedName>
    <alternativeName>
        <fullName evidence="1">tRNA-intron endonuclease</fullName>
    </alternativeName>
</protein>
<organism>
    <name type="scientific">Halobacterium salinarum (strain ATCC 29341 / DSM 671 / R1)</name>
    <dbReference type="NCBI Taxonomy" id="478009"/>
    <lineage>
        <taxon>Archaea</taxon>
        <taxon>Methanobacteriati</taxon>
        <taxon>Methanobacteriota</taxon>
        <taxon>Stenosarchaea group</taxon>
        <taxon>Halobacteria</taxon>
        <taxon>Halobacteriales</taxon>
        <taxon>Halobacteriaceae</taxon>
        <taxon>Halobacterium</taxon>
        <taxon>Halobacterium salinarum NRC-34001</taxon>
    </lineage>
</organism>
<keyword id="KW-0456">Lyase</keyword>
<keyword id="KW-0819">tRNA processing</keyword>
<proteinExistence type="inferred from homology"/>
<accession>B0R7C0</accession>